<name>Y896_TREPA</name>
<accession>O83866</accession>
<dbReference type="EMBL" id="AE000520">
    <property type="protein sequence ID" value="AAC65866.1"/>
    <property type="molecule type" value="Genomic_DNA"/>
</dbReference>
<dbReference type="PIR" id="E71266">
    <property type="entry name" value="E71266"/>
</dbReference>
<dbReference type="IntAct" id="O83866">
    <property type="interactions" value="3"/>
</dbReference>
<dbReference type="STRING" id="243276.TP_0896"/>
<dbReference type="EnsemblBacteria" id="AAC65866">
    <property type="protein sequence ID" value="AAC65866"/>
    <property type="gene ID" value="TP_0896"/>
</dbReference>
<dbReference type="KEGG" id="tpa:TP_0896"/>
<dbReference type="KEGG" id="tpw:TPANIC_0896"/>
<dbReference type="HOGENOM" id="CLU_3123858_0_0_12"/>
<dbReference type="Proteomes" id="UP000000811">
    <property type="component" value="Chromosome"/>
</dbReference>
<gene>
    <name type="ordered locus">TP_0896</name>
</gene>
<keyword id="KW-1185">Reference proteome</keyword>
<organism>
    <name type="scientific">Treponema pallidum (strain Nichols)</name>
    <dbReference type="NCBI Taxonomy" id="243276"/>
    <lineage>
        <taxon>Bacteria</taxon>
        <taxon>Pseudomonadati</taxon>
        <taxon>Spirochaetota</taxon>
        <taxon>Spirochaetia</taxon>
        <taxon>Spirochaetales</taxon>
        <taxon>Treponemataceae</taxon>
        <taxon>Treponema</taxon>
    </lineage>
</organism>
<feature type="chain" id="PRO_0000202346" description="Uncharacterized protein TP_0896">
    <location>
        <begin position="1"/>
        <end position="50"/>
    </location>
</feature>
<sequence length="50" mass="5735">MSLDLVGMYGSFLSEGANLRPFGRYAKIPRIGSHMTRYVEFLRRRISGRA</sequence>
<protein>
    <recommendedName>
        <fullName>Uncharacterized protein TP_0896</fullName>
    </recommendedName>
</protein>
<reference key="1">
    <citation type="journal article" date="1998" name="Science">
        <title>Complete genome sequence of Treponema pallidum, the syphilis spirochete.</title>
        <authorList>
            <person name="Fraser C.M."/>
            <person name="Norris S.J."/>
            <person name="Weinstock G.M."/>
            <person name="White O."/>
            <person name="Sutton G.G."/>
            <person name="Dodson R.J."/>
            <person name="Gwinn M.L."/>
            <person name="Hickey E.K."/>
            <person name="Clayton R.A."/>
            <person name="Ketchum K.A."/>
            <person name="Sodergren E."/>
            <person name="Hardham J.M."/>
            <person name="McLeod M.P."/>
            <person name="Salzberg S.L."/>
            <person name="Peterson J.D."/>
            <person name="Khalak H.G."/>
            <person name="Richardson D.L."/>
            <person name="Howell J.K."/>
            <person name="Chidambaram M."/>
            <person name="Utterback T.R."/>
            <person name="McDonald L.A."/>
            <person name="Artiach P."/>
            <person name="Bowman C."/>
            <person name="Cotton M.D."/>
            <person name="Fujii C."/>
            <person name="Garland S.A."/>
            <person name="Hatch B."/>
            <person name="Horst K."/>
            <person name="Roberts K.M."/>
            <person name="Sandusky M."/>
            <person name="Weidman J.F."/>
            <person name="Smith H.O."/>
            <person name="Venter J.C."/>
        </authorList>
    </citation>
    <scope>NUCLEOTIDE SEQUENCE [LARGE SCALE GENOMIC DNA]</scope>
    <source>
        <strain>Nichols</strain>
    </source>
</reference>
<proteinExistence type="predicted"/>